<name>RS17_DESAH</name>
<organism>
    <name type="scientific">Desulforapulum autotrophicum (strain ATCC 43914 / DSM 3382 / VKM B-1955 / HRM2)</name>
    <name type="common">Desulfobacterium autotrophicum</name>
    <dbReference type="NCBI Taxonomy" id="177437"/>
    <lineage>
        <taxon>Bacteria</taxon>
        <taxon>Pseudomonadati</taxon>
        <taxon>Thermodesulfobacteriota</taxon>
        <taxon>Desulfobacteria</taxon>
        <taxon>Desulfobacterales</taxon>
        <taxon>Desulfobacteraceae</taxon>
        <taxon>Desulforapulum</taxon>
    </lineage>
</organism>
<dbReference type="EMBL" id="CP001087">
    <property type="protein sequence ID" value="ACN16682.1"/>
    <property type="molecule type" value="Genomic_DNA"/>
</dbReference>
<dbReference type="RefSeq" id="WP_015905432.1">
    <property type="nucleotide sequence ID" value="NC_012108.1"/>
</dbReference>
<dbReference type="SMR" id="C0Q9W4"/>
<dbReference type="STRING" id="177437.HRM2_36170"/>
<dbReference type="KEGG" id="dat:HRM2_36170"/>
<dbReference type="eggNOG" id="COG0186">
    <property type="taxonomic scope" value="Bacteria"/>
</dbReference>
<dbReference type="HOGENOM" id="CLU_073626_1_2_7"/>
<dbReference type="OrthoDB" id="9811714at2"/>
<dbReference type="Proteomes" id="UP000000442">
    <property type="component" value="Chromosome"/>
</dbReference>
<dbReference type="GO" id="GO:0022627">
    <property type="term" value="C:cytosolic small ribosomal subunit"/>
    <property type="evidence" value="ECO:0007669"/>
    <property type="project" value="TreeGrafter"/>
</dbReference>
<dbReference type="GO" id="GO:0019843">
    <property type="term" value="F:rRNA binding"/>
    <property type="evidence" value="ECO:0007669"/>
    <property type="project" value="UniProtKB-UniRule"/>
</dbReference>
<dbReference type="GO" id="GO:0003735">
    <property type="term" value="F:structural constituent of ribosome"/>
    <property type="evidence" value="ECO:0007669"/>
    <property type="project" value="InterPro"/>
</dbReference>
<dbReference type="GO" id="GO:0006412">
    <property type="term" value="P:translation"/>
    <property type="evidence" value="ECO:0007669"/>
    <property type="project" value="UniProtKB-UniRule"/>
</dbReference>
<dbReference type="CDD" id="cd00364">
    <property type="entry name" value="Ribosomal_uS17"/>
    <property type="match status" value="1"/>
</dbReference>
<dbReference type="Gene3D" id="2.40.50.140">
    <property type="entry name" value="Nucleic acid-binding proteins"/>
    <property type="match status" value="1"/>
</dbReference>
<dbReference type="HAMAP" id="MF_01345_B">
    <property type="entry name" value="Ribosomal_uS17_B"/>
    <property type="match status" value="1"/>
</dbReference>
<dbReference type="InterPro" id="IPR012340">
    <property type="entry name" value="NA-bd_OB-fold"/>
</dbReference>
<dbReference type="InterPro" id="IPR000266">
    <property type="entry name" value="Ribosomal_uS17"/>
</dbReference>
<dbReference type="InterPro" id="IPR019984">
    <property type="entry name" value="Ribosomal_uS17_bact/chlr"/>
</dbReference>
<dbReference type="InterPro" id="IPR019979">
    <property type="entry name" value="Ribosomal_uS17_CS"/>
</dbReference>
<dbReference type="NCBIfam" id="NF004123">
    <property type="entry name" value="PRK05610.1"/>
    <property type="match status" value="1"/>
</dbReference>
<dbReference type="NCBIfam" id="TIGR03635">
    <property type="entry name" value="uS17_bact"/>
    <property type="match status" value="1"/>
</dbReference>
<dbReference type="PANTHER" id="PTHR10744">
    <property type="entry name" value="40S RIBOSOMAL PROTEIN S11 FAMILY MEMBER"/>
    <property type="match status" value="1"/>
</dbReference>
<dbReference type="PANTHER" id="PTHR10744:SF1">
    <property type="entry name" value="SMALL RIBOSOMAL SUBUNIT PROTEIN US17M"/>
    <property type="match status" value="1"/>
</dbReference>
<dbReference type="Pfam" id="PF00366">
    <property type="entry name" value="Ribosomal_S17"/>
    <property type="match status" value="1"/>
</dbReference>
<dbReference type="PRINTS" id="PR00973">
    <property type="entry name" value="RIBOSOMALS17"/>
</dbReference>
<dbReference type="SUPFAM" id="SSF50249">
    <property type="entry name" value="Nucleic acid-binding proteins"/>
    <property type="match status" value="1"/>
</dbReference>
<dbReference type="PROSITE" id="PS00056">
    <property type="entry name" value="RIBOSOMAL_S17"/>
    <property type="match status" value="1"/>
</dbReference>
<feature type="chain" id="PRO_1000214780" description="Small ribosomal subunit protein uS17">
    <location>
        <begin position="1"/>
        <end position="85"/>
    </location>
</feature>
<comment type="function">
    <text evidence="1">One of the primary rRNA binding proteins, it binds specifically to the 5'-end of 16S ribosomal RNA.</text>
</comment>
<comment type="subunit">
    <text evidence="1">Part of the 30S ribosomal subunit.</text>
</comment>
<comment type="similarity">
    <text evidence="1">Belongs to the universal ribosomal protein uS17 family.</text>
</comment>
<reference key="1">
    <citation type="journal article" date="2009" name="Environ. Microbiol.">
        <title>Genome sequence of Desulfobacterium autotrophicum HRM2, a marine sulfate reducer oxidizing organic carbon completely to carbon dioxide.</title>
        <authorList>
            <person name="Strittmatter A.W."/>
            <person name="Liesegang H."/>
            <person name="Rabus R."/>
            <person name="Decker I."/>
            <person name="Amann J."/>
            <person name="Andres S."/>
            <person name="Henne A."/>
            <person name="Fricke W.F."/>
            <person name="Martinez-Arias R."/>
            <person name="Bartels D."/>
            <person name="Goesmann A."/>
            <person name="Krause L."/>
            <person name="Puehler A."/>
            <person name="Klenk H.P."/>
            <person name="Richter M."/>
            <person name="Schuler M."/>
            <person name="Gloeckner F.O."/>
            <person name="Meyerdierks A."/>
            <person name="Gottschalk G."/>
            <person name="Amann R."/>
        </authorList>
    </citation>
    <scope>NUCLEOTIDE SEQUENCE [LARGE SCALE GENOMIC DNA]</scope>
    <source>
        <strain>ATCC 43914 / DSM 3382 / VKM B-1955 / HRM2</strain>
    </source>
</reference>
<sequence length="85" mass="9900">MNERGRKRVLLGTVVSNKMDKSVVVEVERLVQHRVYKKYITSHKKYAAHDETQLCQIGDMVKITESRPLSKTKRFRVSEIVKKAV</sequence>
<gene>
    <name evidence="1" type="primary">rpsQ</name>
    <name type="ordered locus">HRM2_36170</name>
</gene>
<protein>
    <recommendedName>
        <fullName evidence="1">Small ribosomal subunit protein uS17</fullName>
    </recommendedName>
    <alternativeName>
        <fullName evidence="2">30S ribosomal protein S17</fullName>
    </alternativeName>
</protein>
<evidence type="ECO:0000255" key="1">
    <source>
        <dbReference type="HAMAP-Rule" id="MF_01345"/>
    </source>
</evidence>
<evidence type="ECO:0000305" key="2"/>
<accession>C0Q9W4</accession>
<proteinExistence type="inferred from homology"/>
<keyword id="KW-1185">Reference proteome</keyword>
<keyword id="KW-0687">Ribonucleoprotein</keyword>
<keyword id="KW-0689">Ribosomal protein</keyword>
<keyword id="KW-0694">RNA-binding</keyword>
<keyword id="KW-0699">rRNA-binding</keyword>